<feature type="chain" id="PRO_0000386066" description="GTPase Obg">
    <location>
        <begin position="1"/>
        <end position="422"/>
    </location>
</feature>
<feature type="domain" description="Obg" evidence="3">
    <location>
        <begin position="2"/>
        <end position="157"/>
    </location>
</feature>
<feature type="domain" description="OBG-type G" evidence="1">
    <location>
        <begin position="158"/>
        <end position="325"/>
    </location>
</feature>
<feature type="domain" description="OCT" evidence="2">
    <location>
        <begin position="334"/>
        <end position="420"/>
    </location>
</feature>
<feature type="binding site" evidence="1">
    <location>
        <begin position="164"/>
        <end position="171"/>
    </location>
    <ligand>
        <name>GTP</name>
        <dbReference type="ChEBI" id="CHEBI:37565"/>
    </ligand>
</feature>
<feature type="binding site" evidence="1">
    <location>
        <position position="171"/>
    </location>
    <ligand>
        <name>Mg(2+)</name>
        <dbReference type="ChEBI" id="CHEBI:18420"/>
    </ligand>
</feature>
<feature type="binding site" evidence="1">
    <location>
        <begin position="189"/>
        <end position="193"/>
    </location>
    <ligand>
        <name>GTP</name>
        <dbReference type="ChEBI" id="CHEBI:37565"/>
    </ligand>
</feature>
<feature type="binding site" evidence="1">
    <location>
        <position position="191"/>
    </location>
    <ligand>
        <name>Mg(2+)</name>
        <dbReference type="ChEBI" id="CHEBI:18420"/>
    </ligand>
</feature>
<feature type="binding site" evidence="1">
    <location>
        <begin position="210"/>
        <end position="213"/>
    </location>
    <ligand>
        <name>GTP</name>
        <dbReference type="ChEBI" id="CHEBI:37565"/>
    </ligand>
</feature>
<feature type="binding site" evidence="1">
    <location>
        <begin position="279"/>
        <end position="282"/>
    </location>
    <ligand>
        <name>GTP</name>
        <dbReference type="ChEBI" id="CHEBI:37565"/>
    </ligand>
</feature>
<feature type="binding site" evidence="1">
    <location>
        <begin position="306"/>
        <end position="308"/>
    </location>
    <ligand>
        <name>GTP</name>
        <dbReference type="ChEBI" id="CHEBI:37565"/>
    </ligand>
</feature>
<accession>A5IYU8</accession>
<name>OBG_MYCAP</name>
<sequence>MAKFIDEIKLTLIAGKGGDGIISFRREAHVDKGGPDGGDGGKGGNIYFVGDKGKNTLLSLYGNKQISAEDGINGGPKNLYGATGKSTYVKVPIGTMVFKNDKLVADIIEEKEYLVAQGGIGGRGNAKFKSNRNTAPRICENGTPGEKYLAHIVLKVMSDVGIIGKPSAGKSTLLSAISNAKAKIAEYEFTTLVPQLGLVKYHDHSFTVADLPGLIKGASEGKGLGIQFLRHIERCRVVVQIIDFGSEEKNPIEDFEIINKELEEYSKKLASKPKVVVANKSDLQGFKERVNIFKAKYPDVEIVEISAIERQNLEELKGKIWKILEEAKLLPADEEEETEENVEIKLEDDYKISNPYAGFFEITGPKIEQIYHKIPLVSYDNLIRFNTMLKKIGVWDDLLKYDIKPGDTVRILDYEFEWDGEF</sequence>
<protein>
    <recommendedName>
        <fullName evidence="1">GTPase Obg</fullName>
        <ecNumber evidence="1">3.6.5.-</ecNumber>
    </recommendedName>
    <alternativeName>
        <fullName evidence="1">GTP-binding protein Obg</fullName>
    </alternativeName>
</protein>
<organism>
    <name type="scientific">Mycoplasmopsis agalactiae (strain NCTC 10123 / CIP 59.7 / PG2)</name>
    <name type="common">Mycoplasma agalactiae</name>
    <dbReference type="NCBI Taxonomy" id="347257"/>
    <lineage>
        <taxon>Bacteria</taxon>
        <taxon>Bacillati</taxon>
        <taxon>Mycoplasmatota</taxon>
        <taxon>Mycoplasmoidales</taxon>
        <taxon>Metamycoplasmataceae</taxon>
        <taxon>Mycoplasmopsis</taxon>
    </lineage>
</organism>
<keyword id="KW-0963">Cytoplasm</keyword>
<keyword id="KW-0342">GTP-binding</keyword>
<keyword id="KW-0378">Hydrolase</keyword>
<keyword id="KW-0460">Magnesium</keyword>
<keyword id="KW-0479">Metal-binding</keyword>
<keyword id="KW-0547">Nucleotide-binding</keyword>
<keyword id="KW-1185">Reference proteome</keyword>
<gene>
    <name evidence="1" type="primary">obg</name>
    <name type="ordered locus">MAG5090</name>
</gene>
<comment type="function">
    <text evidence="1">An essential GTPase which binds GTP, GDP and possibly (p)ppGpp with moderate affinity, with high nucleotide exchange rates and a fairly low GTP hydrolysis rate. Plays a role in control of the cell cycle, stress response, ribosome biogenesis and in those bacteria that undergo differentiation, in morphogenesis control.</text>
</comment>
<comment type="cofactor">
    <cofactor evidence="1">
        <name>Mg(2+)</name>
        <dbReference type="ChEBI" id="CHEBI:18420"/>
    </cofactor>
</comment>
<comment type="subunit">
    <text evidence="1">Monomer.</text>
</comment>
<comment type="subcellular location">
    <subcellularLocation>
        <location evidence="1">Cytoplasm</location>
    </subcellularLocation>
</comment>
<comment type="similarity">
    <text evidence="1">Belongs to the TRAFAC class OBG-HflX-like GTPase superfamily. OBG GTPase family.</text>
</comment>
<dbReference type="EC" id="3.6.5.-" evidence="1"/>
<dbReference type="EMBL" id="CU179680">
    <property type="protein sequence ID" value="CAL59207.1"/>
    <property type="molecule type" value="Genomic_DNA"/>
</dbReference>
<dbReference type="RefSeq" id="WP_011949675.1">
    <property type="nucleotide sequence ID" value="NC_009497.1"/>
</dbReference>
<dbReference type="SMR" id="A5IYU8"/>
<dbReference type="STRING" id="347257.MAG5090"/>
<dbReference type="GeneID" id="93358248"/>
<dbReference type="KEGG" id="maa:MAG5090"/>
<dbReference type="HOGENOM" id="CLU_011747_2_1_14"/>
<dbReference type="Proteomes" id="UP000007065">
    <property type="component" value="Chromosome"/>
</dbReference>
<dbReference type="GO" id="GO:0005737">
    <property type="term" value="C:cytoplasm"/>
    <property type="evidence" value="ECO:0007669"/>
    <property type="project" value="UniProtKB-SubCell"/>
</dbReference>
<dbReference type="GO" id="GO:0005525">
    <property type="term" value="F:GTP binding"/>
    <property type="evidence" value="ECO:0007669"/>
    <property type="project" value="UniProtKB-UniRule"/>
</dbReference>
<dbReference type="GO" id="GO:0003924">
    <property type="term" value="F:GTPase activity"/>
    <property type="evidence" value="ECO:0007669"/>
    <property type="project" value="UniProtKB-UniRule"/>
</dbReference>
<dbReference type="GO" id="GO:0000287">
    <property type="term" value="F:magnesium ion binding"/>
    <property type="evidence" value="ECO:0007669"/>
    <property type="project" value="InterPro"/>
</dbReference>
<dbReference type="GO" id="GO:0042254">
    <property type="term" value="P:ribosome biogenesis"/>
    <property type="evidence" value="ECO:0007669"/>
    <property type="project" value="UniProtKB-UniRule"/>
</dbReference>
<dbReference type="CDD" id="cd01898">
    <property type="entry name" value="Obg"/>
    <property type="match status" value="1"/>
</dbReference>
<dbReference type="FunFam" id="2.70.210.12:FF:000001">
    <property type="entry name" value="GTPase Obg"/>
    <property type="match status" value="1"/>
</dbReference>
<dbReference type="Gene3D" id="3.30.300.350">
    <property type="entry name" value="GTP-binding protein OBG, C-terminal domain"/>
    <property type="match status" value="1"/>
</dbReference>
<dbReference type="Gene3D" id="2.70.210.12">
    <property type="entry name" value="GTP1/OBG domain"/>
    <property type="match status" value="1"/>
</dbReference>
<dbReference type="Gene3D" id="3.40.50.300">
    <property type="entry name" value="P-loop containing nucleotide triphosphate hydrolases"/>
    <property type="match status" value="1"/>
</dbReference>
<dbReference type="HAMAP" id="MF_01454">
    <property type="entry name" value="GTPase_Obg"/>
    <property type="match status" value="1"/>
</dbReference>
<dbReference type="InterPro" id="IPR031167">
    <property type="entry name" value="G_OBG"/>
</dbReference>
<dbReference type="InterPro" id="IPR006073">
    <property type="entry name" value="GTP-bd"/>
</dbReference>
<dbReference type="InterPro" id="IPR014100">
    <property type="entry name" value="GTP-bd_Obg/CgtA"/>
</dbReference>
<dbReference type="InterPro" id="IPR036346">
    <property type="entry name" value="GTP-bd_prot_GTP1/OBG_C_sf"/>
</dbReference>
<dbReference type="InterPro" id="IPR006074">
    <property type="entry name" value="GTP1-OBG_CS"/>
</dbReference>
<dbReference type="InterPro" id="IPR006169">
    <property type="entry name" value="GTP1_OBG_dom"/>
</dbReference>
<dbReference type="InterPro" id="IPR036726">
    <property type="entry name" value="GTP1_OBG_dom_sf"/>
</dbReference>
<dbReference type="InterPro" id="IPR045086">
    <property type="entry name" value="OBG_GTPase"/>
</dbReference>
<dbReference type="InterPro" id="IPR015349">
    <property type="entry name" value="OCT_dom"/>
</dbReference>
<dbReference type="InterPro" id="IPR027417">
    <property type="entry name" value="P-loop_NTPase"/>
</dbReference>
<dbReference type="InterPro" id="IPR005225">
    <property type="entry name" value="Small_GTP-bd"/>
</dbReference>
<dbReference type="NCBIfam" id="TIGR02729">
    <property type="entry name" value="Obg_CgtA"/>
    <property type="match status" value="1"/>
</dbReference>
<dbReference type="NCBIfam" id="TIGR03595">
    <property type="entry name" value="Obg_CgtA_exten"/>
    <property type="match status" value="1"/>
</dbReference>
<dbReference type="NCBIfam" id="NF008955">
    <property type="entry name" value="PRK12297.1"/>
    <property type="match status" value="1"/>
</dbReference>
<dbReference type="NCBIfam" id="NF008956">
    <property type="entry name" value="PRK12299.1"/>
    <property type="match status" value="1"/>
</dbReference>
<dbReference type="NCBIfam" id="TIGR00231">
    <property type="entry name" value="small_GTP"/>
    <property type="match status" value="1"/>
</dbReference>
<dbReference type="PANTHER" id="PTHR11702">
    <property type="entry name" value="DEVELOPMENTALLY REGULATED GTP-BINDING PROTEIN-RELATED"/>
    <property type="match status" value="1"/>
</dbReference>
<dbReference type="PANTHER" id="PTHR11702:SF31">
    <property type="entry name" value="MITOCHONDRIAL RIBOSOME-ASSOCIATED GTPASE 2"/>
    <property type="match status" value="1"/>
</dbReference>
<dbReference type="Pfam" id="PF09269">
    <property type="entry name" value="DUF1967"/>
    <property type="match status" value="1"/>
</dbReference>
<dbReference type="Pfam" id="PF01018">
    <property type="entry name" value="GTP1_OBG"/>
    <property type="match status" value="1"/>
</dbReference>
<dbReference type="Pfam" id="PF01926">
    <property type="entry name" value="MMR_HSR1"/>
    <property type="match status" value="1"/>
</dbReference>
<dbReference type="PIRSF" id="PIRSF002401">
    <property type="entry name" value="GTP_bd_Obg/CgtA"/>
    <property type="match status" value="1"/>
</dbReference>
<dbReference type="PRINTS" id="PR00326">
    <property type="entry name" value="GTP1OBG"/>
</dbReference>
<dbReference type="SUPFAM" id="SSF102741">
    <property type="entry name" value="Obg GTP-binding protein C-terminal domain"/>
    <property type="match status" value="1"/>
</dbReference>
<dbReference type="SUPFAM" id="SSF82051">
    <property type="entry name" value="Obg GTP-binding protein N-terminal domain"/>
    <property type="match status" value="1"/>
</dbReference>
<dbReference type="SUPFAM" id="SSF52540">
    <property type="entry name" value="P-loop containing nucleoside triphosphate hydrolases"/>
    <property type="match status" value="1"/>
</dbReference>
<dbReference type="PROSITE" id="PS51710">
    <property type="entry name" value="G_OBG"/>
    <property type="match status" value="1"/>
</dbReference>
<dbReference type="PROSITE" id="PS00905">
    <property type="entry name" value="GTP1_OBG"/>
    <property type="match status" value="1"/>
</dbReference>
<dbReference type="PROSITE" id="PS51883">
    <property type="entry name" value="OBG"/>
    <property type="match status" value="1"/>
</dbReference>
<dbReference type="PROSITE" id="PS51881">
    <property type="entry name" value="OCT"/>
    <property type="match status" value="1"/>
</dbReference>
<proteinExistence type="inferred from homology"/>
<evidence type="ECO:0000255" key="1">
    <source>
        <dbReference type="HAMAP-Rule" id="MF_01454"/>
    </source>
</evidence>
<evidence type="ECO:0000255" key="2">
    <source>
        <dbReference type="PROSITE-ProRule" id="PRU01229"/>
    </source>
</evidence>
<evidence type="ECO:0000255" key="3">
    <source>
        <dbReference type="PROSITE-ProRule" id="PRU01231"/>
    </source>
</evidence>
<reference key="1">
    <citation type="journal article" date="2007" name="PLoS Genet.">
        <title>Being pathogenic, plastic, and sexual while living with a nearly minimal bacterial genome.</title>
        <authorList>
            <person name="Sirand-Pugnet P."/>
            <person name="Lartigue C."/>
            <person name="Marenda M."/>
            <person name="Jacob D."/>
            <person name="Barre A."/>
            <person name="Barbe V."/>
            <person name="Schenowitz C."/>
            <person name="Mangenot S."/>
            <person name="Couloux A."/>
            <person name="Segurens B."/>
            <person name="de Daruvar A."/>
            <person name="Blanchard A."/>
            <person name="Citti C."/>
        </authorList>
    </citation>
    <scope>NUCLEOTIDE SEQUENCE [LARGE SCALE GENOMIC DNA]</scope>
    <source>
        <strain>NCTC 10123 / CIP 59.7 / PG2</strain>
    </source>
</reference>